<organism>
    <name type="scientific">Torpedo marmorata</name>
    <name type="common">Marbled electric ray</name>
    <dbReference type="NCBI Taxonomy" id="7788"/>
    <lineage>
        <taxon>Eukaryota</taxon>
        <taxon>Metazoa</taxon>
        <taxon>Chordata</taxon>
        <taxon>Craniata</taxon>
        <taxon>Vertebrata</taxon>
        <taxon>Chondrichthyes</taxon>
        <taxon>Elasmobranchii</taxon>
        <taxon>Batoidea</taxon>
        <taxon>Torpediniformes</taxon>
        <taxon>Torpedinidae</taxon>
        <taxon>Torpedo</taxon>
    </lineage>
</organism>
<accession>Q03637</accession>
<dbReference type="EMBL" id="X59359">
    <property type="protein sequence ID" value="CAA42009.1"/>
    <property type="molecule type" value="mRNA"/>
</dbReference>
<dbReference type="PIR" id="S15035">
    <property type="entry name" value="S15035"/>
</dbReference>
<dbReference type="SMR" id="Q03637"/>
<dbReference type="GO" id="GO:0005581">
    <property type="term" value="C:collagen trimer"/>
    <property type="evidence" value="ECO:0007669"/>
    <property type="project" value="UniProtKB-KW"/>
</dbReference>
<dbReference type="GO" id="GO:0031012">
    <property type="term" value="C:extracellular matrix"/>
    <property type="evidence" value="ECO:0007669"/>
    <property type="project" value="TreeGrafter"/>
</dbReference>
<dbReference type="GO" id="GO:0005615">
    <property type="term" value="C:extracellular space"/>
    <property type="evidence" value="ECO:0007669"/>
    <property type="project" value="TreeGrafter"/>
</dbReference>
<dbReference type="GO" id="GO:0045202">
    <property type="term" value="C:synapse"/>
    <property type="evidence" value="ECO:0007669"/>
    <property type="project" value="UniProtKB-SubCell"/>
</dbReference>
<dbReference type="GO" id="GO:0030020">
    <property type="term" value="F:extracellular matrix structural constituent conferring tensile strength"/>
    <property type="evidence" value="ECO:0007669"/>
    <property type="project" value="TreeGrafter"/>
</dbReference>
<dbReference type="GO" id="GO:0030198">
    <property type="term" value="P:extracellular matrix organization"/>
    <property type="evidence" value="ECO:0007669"/>
    <property type="project" value="TreeGrafter"/>
</dbReference>
<dbReference type="InterPro" id="IPR008160">
    <property type="entry name" value="Collagen"/>
</dbReference>
<dbReference type="InterPro" id="IPR050149">
    <property type="entry name" value="Collagen_superfamily"/>
</dbReference>
<dbReference type="PANTHER" id="PTHR24023">
    <property type="entry name" value="COLLAGEN ALPHA"/>
    <property type="match status" value="1"/>
</dbReference>
<dbReference type="PANTHER" id="PTHR24023:SF1082">
    <property type="entry name" value="COLLAGEN TRIPLE HELIX REPEAT"/>
    <property type="match status" value="1"/>
</dbReference>
<dbReference type="Pfam" id="PF01391">
    <property type="entry name" value="Collagen"/>
    <property type="match status" value="1"/>
</dbReference>
<proteinExistence type="evidence at protein level"/>
<name>COLQ_TORMA</name>
<keyword id="KW-0176">Collagen</keyword>
<keyword id="KW-0903">Direct protein sequencing</keyword>
<keyword id="KW-1015">Disulfide bond</keyword>
<keyword id="KW-0531">Neurotransmitter degradation</keyword>
<keyword id="KW-0677">Repeat</keyword>
<keyword id="KW-0732">Signal</keyword>
<keyword id="KW-0770">Synapse</keyword>
<evidence type="ECO:0000255" key="1"/>
<evidence type="ECO:0000256" key="2">
    <source>
        <dbReference type="SAM" id="MobiDB-lite"/>
    </source>
</evidence>
<evidence type="ECO:0000269" key="3">
    <source>
    </source>
</evidence>
<evidence type="ECO:0000305" key="4"/>
<reference key="1">
    <citation type="journal article" date="1991" name="EMBO J.">
        <title>Primary structure of a collagenic tail peptide of Torpedo acetylcholinesterase: co-expression with catalytic subunit induces the production of collagen-tailed forms in transfected cells.</title>
        <authorList>
            <person name="Krejci E."/>
            <person name="Coussen F."/>
            <person name="Duval N."/>
            <person name="Chatel J.-M."/>
            <person name="Legay C."/>
            <person name="Puype M."/>
            <person name="Vanderkerckhove J."/>
            <person name="Cartaud J."/>
            <person name="Bon S."/>
            <person name="Massoulie J."/>
        </authorList>
    </citation>
    <scope>NUCLEOTIDE SEQUENCE [MRNA]</scope>
    <scope>PARTIAL PROTEIN SEQUENCE</scope>
    <source>
        <tissue>Electric organ</tissue>
    </source>
</reference>
<reference key="2">
    <citation type="journal article" date="1992" name="EMBO J.">
        <title>Molecular architecture of acetylcholinesterase collagen-tailed forms; construction of a glycolipid-tailed tetramer.</title>
        <authorList>
            <person name="Duval N."/>
            <person name="Krejci E."/>
            <person name="Grassi J."/>
            <person name="Coussen F."/>
            <person name="Massoulie J."/>
            <person name="Bon S."/>
        </authorList>
    </citation>
    <scope>SUBUNITS INTERACTION</scope>
    <source>
        <tissue>Electric organ</tissue>
    </source>
</reference>
<reference key="3">
    <citation type="journal article" date="1997" name="J. Biol. Chem.">
        <title>Quaternary associations of acetylcholinesterase. II. The polyproline attachment domain of the collagen tail.</title>
        <authorList>
            <person name="Bon S."/>
            <person name="Coussen F."/>
            <person name="Massoulie J."/>
        </authorList>
    </citation>
    <scope>IDENTIFICATION OF PRO-RICH ATTACHMENT DOMAIN</scope>
</reference>
<reference key="4">
    <citation type="journal article" date="2000" name="Protein Eng.">
        <title>Molecular modeling of the collagen-like tail of asymmetric acetylcholinesterase.</title>
        <authorList>
            <person name="Deprez P."/>
            <person name="Inestrosa N.C."/>
        </authorList>
    </citation>
    <scope>3D-STRUCTURE MODELING OF COLLAGEN-LIKE DOMAIN</scope>
</reference>
<protein>
    <recommendedName>
        <fullName>Acetylcholinesterase collagenic tail peptide</fullName>
    </recommendedName>
    <alternativeName>
        <fullName>AChE Q subunit</fullName>
    </alternativeName>
</protein>
<comment type="function">
    <text>Anchors the catalytic subunits of asymmetric AChE to the synaptic basal lamina.</text>
</comment>
<comment type="subunit">
    <text evidence="3">The asymmetric form of AChE is a disulfide-bonded oligomer composed of a collagenic subunit (Q) and a variable number of asymmetric (T) catalytic subunits. The N-terminal of the collagenic subunit (Q) associates with the C-terminal of the catalytic subunit (T).</text>
</comment>
<comment type="subcellular location">
    <subcellularLocation>
        <location>Synapse</location>
    </subcellularLocation>
</comment>
<comment type="tissue specificity">
    <text>Expressed in electric organs but not in muscle.</text>
</comment>
<comment type="domain">
    <text>The proline-rich attachment domain (PRAD) binds the AChE catalytic subunits.</text>
</comment>
<comment type="similarity">
    <text evidence="4">Belongs to the COLQ family.</text>
</comment>
<sequence length="471" mass="49545">MLGILLQKATATLASGLNSSRAGMFPIALGLLLQLFFDHALAESTFLDKAFSLQAALLPMEHKKRSVNKCCLLTPPPPPMFPPPFFTETNILQEVDLNNLPLEIKPTEPSCKITCIIGPPGPSGPQGPQGIQGIMGPKGEIGEIGRPGRKGRPGVRGPRGMPGSPCSPGPIGPRGEKGDIGLTGLPGARGPMGPKGLTGQKGEKGIIGEKGQQGIKGEMGVMGLPGMLGQKGEMGPKGVSGAPGHRGPVGRPGKRGKTGLKGDIGPPGIMGPSGPPGPSGLPVMSGSGHLMVGPKGERGLPGPVGRCDCNLPQTVVNPSYNKFPTLINPPQVPAIFVVDSEDELEKLNTENALAFRKDQKSLYYRDTVGWLPIQIAPIQQMRQNPTGFCGDEIVQVENGEECDDGNRIVTDSCINCKQAYCGDGYLQSGLEECDGKDFGYHTCKSYLPGSYGELKCTSYCYIDSTGCRYFT</sequence>
<feature type="signal peptide" evidence="1">
    <location>
        <begin position="1"/>
        <end position="30"/>
    </location>
</feature>
<feature type="chain" id="PRO_0000005856" description="Acetylcholinesterase collagenic tail peptide">
    <location>
        <begin position="31"/>
        <end position="471"/>
    </location>
</feature>
<feature type="domain" description="Collagen-like 1">
    <location>
        <begin position="118"/>
        <end position="282"/>
    </location>
</feature>
<feature type="domain" description="Collagen-like 2">
    <location>
        <begin position="293"/>
        <end position="307"/>
    </location>
</feature>
<feature type="repeat" description="1">
    <location>
        <begin position="388"/>
        <end position="413"/>
    </location>
</feature>
<feature type="repeat" description="2">
    <location>
        <begin position="420"/>
        <end position="443"/>
    </location>
</feature>
<feature type="region of interest" description="PRAD">
    <location>
        <begin position="70"/>
        <end position="86"/>
    </location>
</feature>
<feature type="region of interest" description="Disordered" evidence="2">
    <location>
        <begin position="140"/>
        <end position="205"/>
    </location>
</feature>
<feature type="region of interest" description="Disordered" evidence="2">
    <location>
        <begin position="237"/>
        <end position="267"/>
    </location>
</feature>
<feature type="region of interest" description="2 X 26 AA approximate repeats">
    <location>
        <begin position="388"/>
        <end position="443"/>
    </location>
</feature>
<feature type="compositionally biased region" description="Low complexity" evidence="2">
    <location>
        <begin position="155"/>
        <end position="164"/>
    </location>
</feature>
<feature type="compositionally biased region" description="Low complexity" evidence="2">
    <location>
        <begin position="242"/>
        <end position="251"/>
    </location>
</feature>
<feature type="disulfide bond" description="Interchain (with T subunit)" evidence="1">
    <location>
        <position position="70"/>
    </location>
</feature>
<feature type="disulfide bond" description="Interchain (with T subunit)" evidence="1">
    <location>
        <position position="71"/>
    </location>
</feature>
<feature type="disulfide bond" description="Interchain" evidence="1">
    <location>
        <position position="111"/>
    </location>
</feature>
<feature type="disulfide bond" description="Interchain" evidence="1">
    <location>
        <position position="115"/>
    </location>
</feature>
<feature type="disulfide bond" description="Interchain" evidence="1">
    <location>
        <position position="307"/>
    </location>
</feature>
<feature type="disulfide bond" description="Interchain" evidence="1">
    <location>
        <position position="309"/>
    </location>
</feature>